<comment type="function">
    <text evidence="1">May function as a transcriptional regulator that controls feoABC expression.</text>
</comment>
<comment type="similarity">
    <text evidence="1">Belongs to the FeoC family.</text>
</comment>
<name>FEOC_SHISS</name>
<accession>Q3YWL5</accession>
<feature type="chain" id="PRO_0000313072" description="Probable [Fe-S]-dependent transcriptional repressor">
    <location>
        <begin position="1"/>
        <end position="78"/>
    </location>
</feature>
<feature type="binding site" evidence="1">
    <location>
        <position position="56"/>
    </location>
    <ligand>
        <name>iron-sulfur cluster</name>
        <dbReference type="ChEBI" id="CHEBI:30408"/>
    </ligand>
</feature>
<feature type="binding site" evidence="1">
    <location>
        <position position="61"/>
    </location>
    <ligand>
        <name>iron-sulfur cluster</name>
        <dbReference type="ChEBI" id="CHEBI:30408"/>
    </ligand>
</feature>
<feature type="binding site" evidence="1">
    <location>
        <position position="64"/>
    </location>
    <ligand>
        <name>iron-sulfur cluster</name>
        <dbReference type="ChEBI" id="CHEBI:30408"/>
    </ligand>
</feature>
<feature type="binding site" evidence="1">
    <location>
        <position position="70"/>
    </location>
    <ligand>
        <name>iron-sulfur cluster</name>
        <dbReference type="ChEBI" id="CHEBI:30408"/>
    </ligand>
</feature>
<gene>
    <name evidence="1" type="primary">feoC</name>
    <name type="ordered locus">SSON_3541</name>
</gene>
<proteinExistence type="inferred from homology"/>
<evidence type="ECO:0000255" key="1">
    <source>
        <dbReference type="HAMAP-Rule" id="MF_01586"/>
    </source>
</evidence>
<reference key="1">
    <citation type="journal article" date="2005" name="Nucleic Acids Res.">
        <title>Genome dynamics and diversity of Shigella species, the etiologic agents of bacillary dysentery.</title>
        <authorList>
            <person name="Yang F."/>
            <person name="Yang J."/>
            <person name="Zhang X."/>
            <person name="Chen L."/>
            <person name="Jiang Y."/>
            <person name="Yan Y."/>
            <person name="Tang X."/>
            <person name="Wang J."/>
            <person name="Xiong Z."/>
            <person name="Dong J."/>
            <person name="Xue Y."/>
            <person name="Zhu Y."/>
            <person name="Xu X."/>
            <person name="Sun L."/>
            <person name="Chen S."/>
            <person name="Nie H."/>
            <person name="Peng J."/>
            <person name="Xu J."/>
            <person name="Wang Y."/>
            <person name="Yuan Z."/>
            <person name="Wen Y."/>
            <person name="Yao Z."/>
            <person name="Shen Y."/>
            <person name="Qiang B."/>
            <person name="Hou Y."/>
            <person name="Yu J."/>
            <person name="Jin Q."/>
        </authorList>
    </citation>
    <scope>NUCLEOTIDE SEQUENCE [LARGE SCALE GENOMIC DNA]</scope>
    <source>
        <strain>Ss046</strain>
    </source>
</reference>
<sequence>MASLIQVRDLLALRGRMEATQISQTLNTPQPMINAMLQQLESMGKAVRIQEEPDGCLSGSCKSCPEGKACLREWWALR</sequence>
<dbReference type="EMBL" id="CP000038">
    <property type="protein sequence ID" value="AAZ90097.1"/>
    <property type="molecule type" value="Genomic_DNA"/>
</dbReference>
<dbReference type="RefSeq" id="WP_001295699.1">
    <property type="nucleotide sequence ID" value="NC_007384.1"/>
</dbReference>
<dbReference type="SMR" id="Q3YWL5"/>
<dbReference type="GeneID" id="93778588"/>
<dbReference type="KEGG" id="ssn:SSON_3541"/>
<dbReference type="HOGENOM" id="CLU_189182_0_0_6"/>
<dbReference type="Proteomes" id="UP000002529">
    <property type="component" value="Chromosome"/>
</dbReference>
<dbReference type="GO" id="GO:0003677">
    <property type="term" value="F:DNA binding"/>
    <property type="evidence" value="ECO:0007669"/>
    <property type="project" value="UniProtKB-KW"/>
</dbReference>
<dbReference type="GO" id="GO:0005506">
    <property type="term" value="F:iron ion binding"/>
    <property type="evidence" value="ECO:0007669"/>
    <property type="project" value="UniProtKB-UniRule"/>
</dbReference>
<dbReference type="GO" id="GO:0051536">
    <property type="term" value="F:iron-sulfur cluster binding"/>
    <property type="evidence" value="ECO:0007669"/>
    <property type="project" value="UniProtKB-KW"/>
</dbReference>
<dbReference type="Gene3D" id="1.10.10.10">
    <property type="entry name" value="Winged helix-like DNA-binding domain superfamily/Winged helix DNA-binding domain"/>
    <property type="match status" value="1"/>
</dbReference>
<dbReference type="HAMAP" id="MF_01586">
    <property type="entry name" value="FeoC"/>
    <property type="match status" value="1"/>
</dbReference>
<dbReference type="InterPro" id="IPR023732">
    <property type="entry name" value="FeoC"/>
</dbReference>
<dbReference type="InterPro" id="IPR015102">
    <property type="entry name" value="Tscrpt_reg_HTH_FeoC"/>
</dbReference>
<dbReference type="InterPro" id="IPR036388">
    <property type="entry name" value="WH-like_DNA-bd_sf"/>
</dbReference>
<dbReference type="InterPro" id="IPR036390">
    <property type="entry name" value="WH_DNA-bd_sf"/>
</dbReference>
<dbReference type="NCBIfam" id="NF011960">
    <property type="entry name" value="PRK15431.1"/>
    <property type="match status" value="1"/>
</dbReference>
<dbReference type="Pfam" id="PF09012">
    <property type="entry name" value="FeoC"/>
    <property type="match status" value="1"/>
</dbReference>
<dbReference type="SUPFAM" id="SSF46785">
    <property type="entry name" value="Winged helix' DNA-binding domain"/>
    <property type="match status" value="1"/>
</dbReference>
<keyword id="KW-0238">DNA-binding</keyword>
<keyword id="KW-0408">Iron</keyword>
<keyword id="KW-0411">Iron-sulfur</keyword>
<keyword id="KW-0479">Metal-binding</keyword>
<keyword id="KW-1185">Reference proteome</keyword>
<keyword id="KW-0678">Repressor</keyword>
<keyword id="KW-0804">Transcription</keyword>
<keyword id="KW-0805">Transcription regulation</keyword>
<organism>
    <name type="scientific">Shigella sonnei (strain Ss046)</name>
    <dbReference type="NCBI Taxonomy" id="300269"/>
    <lineage>
        <taxon>Bacteria</taxon>
        <taxon>Pseudomonadati</taxon>
        <taxon>Pseudomonadota</taxon>
        <taxon>Gammaproteobacteria</taxon>
        <taxon>Enterobacterales</taxon>
        <taxon>Enterobacteriaceae</taxon>
        <taxon>Shigella</taxon>
    </lineage>
</organism>
<protein>
    <recommendedName>
        <fullName evidence="1">Probable [Fe-S]-dependent transcriptional repressor</fullName>
    </recommendedName>
</protein>